<feature type="chain" id="PRO_0000347187" description="Immunoglobulin-like and fibronectin type III domain-containing protein 1">
    <location>
        <begin position="1"/>
        <end position="2849"/>
    </location>
</feature>
<feature type="domain" description="Ig-like 1">
    <location>
        <begin position="187"/>
        <end position="277"/>
    </location>
</feature>
<feature type="domain" description="Ig-like 2">
    <location>
        <begin position="468"/>
        <end position="557"/>
    </location>
</feature>
<feature type="domain" description="Ig-like 3">
    <location>
        <begin position="2034"/>
        <end position="2137"/>
    </location>
</feature>
<feature type="domain" description="Fibronectin type-III 1" evidence="2">
    <location>
        <begin position="2244"/>
        <end position="2339"/>
    </location>
</feature>
<feature type="domain" description="Fibronectin type-III 2" evidence="2">
    <location>
        <begin position="2344"/>
        <end position="2443"/>
    </location>
</feature>
<feature type="domain" description="Fibronectin type-III 3" evidence="2">
    <location>
        <begin position="2445"/>
        <end position="2540"/>
    </location>
</feature>
<feature type="domain" description="Ig-like 4">
    <location>
        <begin position="2544"/>
        <end position="2628"/>
    </location>
</feature>
<feature type="domain" description="Fibronectin type-III 4" evidence="2">
    <location>
        <begin position="2641"/>
        <end position="2735"/>
    </location>
</feature>
<feature type="domain" description="Ig-like 5">
    <location>
        <begin position="2749"/>
        <end position="2845"/>
    </location>
</feature>
<feature type="region of interest" description="Disordered" evidence="3">
    <location>
        <begin position="82"/>
        <end position="108"/>
    </location>
</feature>
<feature type="region of interest" description="Disordered" evidence="3">
    <location>
        <begin position="577"/>
        <end position="600"/>
    </location>
</feature>
<feature type="region of interest" description="Disordered" evidence="3">
    <location>
        <begin position="652"/>
        <end position="760"/>
    </location>
</feature>
<feature type="region of interest" description="Disordered" evidence="3">
    <location>
        <begin position="864"/>
        <end position="924"/>
    </location>
</feature>
<feature type="region of interest" description="Disordered" evidence="3">
    <location>
        <begin position="962"/>
        <end position="981"/>
    </location>
</feature>
<feature type="region of interest" description="Disordered" evidence="3">
    <location>
        <begin position="1061"/>
        <end position="1103"/>
    </location>
</feature>
<feature type="region of interest" description="Disordered" evidence="3">
    <location>
        <begin position="1221"/>
        <end position="1258"/>
    </location>
</feature>
<feature type="region of interest" description="Disordered" evidence="3">
    <location>
        <begin position="1312"/>
        <end position="1338"/>
    </location>
</feature>
<feature type="region of interest" description="Disordered" evidence="3">
    <location>
        <begin position="1350"/>
        <end position="1384"/>
    </location>
</feature>
<feature type="region of interest" description="Disordered" evidence="3">
    <location>
        <begin position="1498"/>
        <end position="1523"/>
    </location>
</feature>
<feature type="region of interest" description="Disordered" evidence="3">
    <location>
        <begin position="1654"/>
        <end position="1675"/>
    </location>
</feature>
<feature type="region of interest" description="Disordered" evidence="3">
    <location>
        <begin position="1724"/>
        <end position="1780"/>
    </location>
</feature>
<feature type="region of interest" description="Disordered" evidence="3">
    <location>
        <begin position="1827"/>
        <end position="2055"/>
    </location>
</feature>
<feature type="coiled-coil region" evidence="1">
    <location>
        <begin position="347"/>
        <end position="380"/>
    </location>
</feature>
<feature type="compositionally biased region" description="Low complexity" evidence="3">
    <location>
        <begin position="90"/>
        <end position="101"/>
    </location>
</feature>
<feature type="compositionally biased region" description="Basic and acidic residues" evidence="3">
    <location>
        <begin position="717"/>
        <end position="742"/>
    </location>
</feature>
<feature type="compositionally biased region" description="Polar residues" evidence="3">
    <location>
        <begin position="866"/>
        <end position="880"/>
    </location>
</feature>
<feature type="compositionally biased region" description="Gly residues" evidence="3">
    <location>
        <begin position="1070"/>
        <end position="1084"/>
    </location>
</feature>
<feature type="compositionally biased region" description="Polar residues" evidence="3">
    <location>
        <begin position="1873"/>
        <end position="1882"/>
    </location>
</feature>
<feature type="compositionally biased region" description="Basic and acidic residues" evidence="3">
    <location>
        <begin position="1988"/>
        <end position="2004"/>
    </location>
</feature>
<feature type="compositionally biased region" description="Basic and acidic residues" evidence="3">
    <location>
        <begin position="2012"/>
        <end position="2021"/>
    </location>
</feature>
<feature type="splice variant" id="VSP_035061" description="In isoform 5." evidence="5">
    <location>
        <begin position="1"/>
        <end position="2617"/>
    </location>
</feature>
<feature type="splice variant" id="VSP_035062" description="In isoform 3." evidence="6">
    <location>
        <begin position="1"/>
        <end position="2204"/>
    </location>
</feature>
<feature type="splice variant" id="VSP_039842" description="In isoform 2." evidence="6">
    <location>
        <begin position="1"/>
        <end position="1048"/>
    </location>
</feature>
<feature type="splice variant" id="VSP_039843" description="In isoform 4." evidence="6">
    <location>
        <begin position="557"/>
        <end position="2051"/>
    </location>
</feature>
<feature type="splice variant" id="VSP_035065" description="In isoform 3." evidence="6">
    <original>WLCLPSVCRKDSGRYSVTLRSEGGCVQAEFTLQVI</original>
    <variation>MGTRWWAATTRASNWLWQMATHGCASPACAGRTVA</variation>
    <location>
        <begin position="2205"/>
        <end position="2239"/>
    </location>
</feature>
<feature type="sequence conflict" description="In Ref. 1; ACA28708." evidence="7" ref="1">
    <original>P</original>
    <variation>L</variation>
    <location>
        <position position="2466"/>
    </location>
</feature>
<feature type="sequence conflict" description="In Ref. 1; ACA28708." evidence="7" ref="1">
    <original>E</original>
    <variation>G</variation>
    <location>
        <position position="2626"/>
    </location>
</feature>
<feature type="sequence conflict" description="In Ref. 2; BAC29455." evidence="7" ref="2">
    <original>T</original>
    <variation>N</variation>
    <location>
        <position position="2628"/>
    </location>
</feature>
<feature type="sequence conflict" description="In Ref. 1; ACA28708." evidence="7" ref="1">
    <original>T</original>
    <variation>A</variation>
    <location>
        <position position="2839"/>
    </location>
</feature>
<keyword id="KW-0025">Alternative splicing</keyword>
<keyword id="KW-0175">Coiled coil</keyword>
<keyword id="KW-0963">Cytoplasm</keyword>
<keyword id="KW-0393">Immunoglobulin domain</keyword>
<keyword id="KW-0539">Nucleus</keyword>
<keyword id="KW-1185">Reference proteome</keyword>
<keyword id="KW-0677">Repeat</keyword>
<evidence type="ECO:0000255" key="1"/>
<evidence type="ECO:0000255" key="2">
    <source>
        <dbReference type="PROSITE-ProRule" id="PRU00316"/>
    </source>
</evidence>
<evidence type="ECO:0000256" key="3">
    <source>
        <dbReference type="SAM" id="MobiDB-lite"/>
    </source>
</evidence>
<evidence type="ECO:0000269" key="4">
    <source>
    </source>
</evidence>
<evidence type="ECO:0000303" key="5">
    <source>
    </source>
</evidence>
<evidence type="ECO:0000303" key="6">
    <source>
    </source>
</evidence>
<evidence type="ECO:0000305" key="7"/>
<protein>
    <recommendedName>
        <fullName>Immunoglobulin-like and fibronectin type III domain-containing protein 1</fullName>
    </recommendedName>
</protein>
<name>IGFN1_MOUSE</name>
<reference key="1">
    <citation type="journal article" date="2010" name="Exp. Cell Res.">
        <title>Identification of a Z-band associated protein complex involving KY, FLNC and IGFN1.</title>
        <authorList>
            <person name="Baker J."/>
            <person name="Riley G."/>
            <person name="Romero M.R."/>
            <person name="Haynes A.R."/>
            <person name="Hilton H."/>
            <person name="Simon M."/>
            <person name="Hancock J."/>
            <person name="Tateossian H."/>
            <person name="Ripoll V.M."/>
            <person name="Blanco G."/>
        </authorList>
    </citation>
    <scope>NUCLEOTIDE SEQUENCE [MRNA] (ISOFORMS 1; 2 AND 3)</scope>
    <scope>NUCLEOTIDE SEQUENCE [MRNA] OF 122-2836 (ISOFORM 4)</scope>
    <scope>INTERACTION WITH FLNC AND KY</scope>
    <scope>SUBCELLULAR LOCATION</scope>
    <scope>TISSUE SPECIFICITY</scope>
    <source>
        <strain>C3H/HeJ</strain>
        <strain>C57BL/6J</strain>
        <tissue>Skeletal muscle</tissue>
    </source>
</reference>
<reference key="2">
    <citation type="journal article" date="2005" name="Science">
        <title>The transcriptional landscape of the mammalian genome.</title>
        <authorList>
            <person name="Carninci P."/>
            <person name="Kasukawa T."/>
            <person name="Katayama S."/>
            <person name="Gough J."/>
            <person name="Frith M.C."/>
            <person name="Maeda N."/>
            <person name="Oyama R."/>
            <person name="Ravasi T."/>
            <person name="Lenhard B."/>
            <person name="Wells C."/>
            <person name="Kodzius R."/>
            <person name="Shimokawa K."/>
            <person name="Bajic V.B."/>
            <person name="Brenner S.E."/>
            <person name="Batalov S."/>
            <person name="Forrest A.R."/>
            <person name="Zavolan M."/>
            <person name="Davis M.J."/>
            <person name="Wilming L.G."/>
            <person name="Aidinis V."/>
            <person name="Allen J.E."/>
            <person name="Ambesi-Impiombato A."/>
            <person name="Apweiler R."/>
            <person name="Aturaliya R.N."/>
            <person name="Bailey T.L."/>
            <person name="Bansal M."/>
            <person name="Baxter L."/>
            <person name="Beisel K.W."/>
            <person name="Bersano T."/>
            <person name="Bono H."/>
            <person name="Chalk A.M."/>
            <person name="Chiu K.P."/>
            <person name="Choudhary V."/>
            <person name="Christoffels A."/>
            <person name="Clutterbuck D.R."/>
            <person name="Crowe M.L."/>
            <person name="Dalla E."/>
            <person name="Dalrymple B.P."/>
            <person name="de Bono B."/>
            <person name="Della Gatta G."/>
            <person name="di Bernardo D."/>
            <person name="Down T."/>
            <person name="Engstrom P."/>
            <person name="Fagiolini M."/>
            <person name="Faulkner G."/>
            <person name="Fletcher C.F."/>
            <person name="Fukushima T."/>
            <person name="Furuno M."/>
            <person name="Futaki S."/>
            <person name="Gariboldi M."/>
            <person name="Georgii-Hemming P."/>
            <person name="Gingeras T.R."/>
            <person name="Gojobori T."/>
            <person name="Green R.E."/>
            <person name="Gustincich S."/>
            <person name="Harbers M."/>
            <person name="Hayashi Y."/>
            <person name="Hensch T.K."/>
            <person name="Hirokawa N."/>
            <person name="Hill D."/>
            <person name="Huminiecki L."/>
            <person name="Iacono M."/>
            <person name="Ikeo K."/>
            <person name="Iwama A."/>
            <person name="Ishikawa T."/>
            <person name="Jakt M."/>
            <person name="Kanapin A."/>
            <person name="Katoh M."/>
            <person name="Kawasawa Y."/>
            <person name="Kelso J."/>
            <person name="Kitamura H."/>
            <person name="Kitano H."/>
            <person name="Kollias G."/>
            <person name="Krishnan S.P."/>
            <person name="Kruger A."/>
            <person name="Kummerfeld S.K."/>
            <person name="Kurochkin I.V."/>
            <person name="Lareau L.F."/>
            <person name="Lazarevic D."/>
            <person name="Lipovich L."/>
            <person name="Liu J."/>
            <person name="Liuni S."/>
            <person name="McWilliam S."/>
            <person name="Madan Babu M."/>
            <person name="Madera M."/>
            <person name="Marchionni L."/>
            <person name="Matsuda H."/>
            <person name="Matsuzawa S."/>
            <person name="Miki H."/>
            <person name="Mignone F."/>
            <person name="Miyake S."/>
            <person name="Morris K."/>
            <person name="Mottagui-Tabar S."/>
            <person name="Mulder N."/>
            <person name="Nakano N."/>
            <person name="Nakauchi H."/>
            <person name="Ng P."/>
            <person name="Nilsson R."/>
            <person name="Nishiguchi S."/>
            <person name="Nishikawa S."/>
            <person name="Nori F."/>
            <person name="Ohara O."/>
            <person name="Okazaki Y."/>
            <person name="Orlando V."/>
            <person name="Pang K.C."/>
            <person name="Pavan W.J."/>
            <person name="Pavesi G."/>
            <person name="Pesole G."/>
            <person name="Petrovsky N."/>
            <person name="Piazza S."/>
            <person name="Reed J."/>
            <person name="Reid J.F."/>
            <person name="Ring B.Z."/>
            <person name="Ringwald M."/>
            <person name="Rost B."/>
            <person name="Ruan Y."/>
            <person name="Salzberg S.L."/>
            <person name="Sandelin A."/>
            <person name="Schneider C."/>
            <person name="Schoenbach C."/>
            <person name="Sekiguchi K."/>
            <person name="Semple C.A."/>
            <person name="Seno S."/>
            <person name="Sessa L."/>
            <person name="Sheng Y."/>
            <person name="Shibata Y."/>
            <person name="Shimada H."/>
            <person name="Shimada K."/>
            <person name="Silva D."/>
            <person name="Sinclair B."/>
            <person name="Sperling S."/>
            <person name="Stupka E."/>
            <person name="Sugiura K."/>
            <person name="Sultana R."/>
            <person name="Takenaka Y."/>
            <person name="Taki K."/>
            <person name="Tammoja K."/>
            <person name="Tan S.L."/>
            <person name="Tang S."/>
            <person name="Taylor M.S."/>
            <person name="Tegner J."/>
            <person name="Teichmann S.A."/>
            <person name="Ueda H.R."/>
            <person name="van Nimwegen E."/>
            <person name="Verardo R."/>
            <person name="Wei C.L."/>
            <person name="Yagi K."/>
            <person name="Yamanishi H."/>
            <person name="Zabarovsky E."/>
            <person name="Zhu S."/>
            <person name="Zimmer A."/>
            <person name="Hide W."/>
            <person name="Bult C."/>
            <person name="Grimmond S.M."/>
            <person name="Teasdale R.D."/>
            <person name="Liu E.T."/>
            <person name="Brusic V."/>
            <person name="Quackenbush J."/>
            <person name="Wahlestedt C."/>
            <person name="Mattick J.S."/>
            <person name="Hume D.A."/>
            <person name="Kai C."/>
            <person name="Sasaki D."/>
            <person name="Tomaru Y."/>
            <person name="Fukuda S."/>
            <person name="Kanamori-Katayama M."/>
            <person name="Suzuki M."/>
            <person name="Aoki J."/>
            <person name="Arakawa T."/>
            <person name="Iida J."/>
            <person name="Imamura K."/>
            <person name="Itoh M."/>
            <person name="Kato T."/>
            <person name="Kawaji H."/>
            <person name="Kawagashira N."/>
            <person name="Kawashima T."/>
            <person name="Kojima M."/>
            <person name="Kondo S."/>
            <person name="Konno H."/>
            <person name="Nakano K."/>
            <person name="Ninomiya N."/>
            <person name="Nishio T."/>
            <person name="Okada M."/>
            <person name="Plessy C."/>
            <person name="Shibata K."/>
            <person name="Shiraki T."/>
            <person name="Suzuki S."/>
            <person name="Tagami M."/>
            <person name="Waki K."/>
            <person name="Watahiki A."/>
            <person name="Okamura-Oho Y."/>
            <person name="Suzuki H."/>
            <person name="Kawai J."/>
            <person name="Hayashizaki Y."/>
        </authorList>
    </citation>
    <scope>NUCLEOTIDE SEQUENCE [LARGE SCALE MRNA] (ISOFORM 5)</scope>
    <source>
        <strain>C57BL/6J</strain>
        <tissue>Bone</tissue>
    </source>
</reference>
<reference key="3">
    <citation type="journal article" date="2009" name="PLoS Biol.">
        <title>Lineage-specific biology revealed by a finished genome assembly of the mouse.</title>
        <authorList>
            <person name="Church D.M."/>
            <person name="Goodstadt L."/>
            <person name="Hillier L.W."/>
            <person name="Zody M.C."/>
            <person name="Goldstein S."/>
            <person name="She X."/>
            <person name="Bult C.J."/>
            <person name="Agarwala R."/>
            <person name="Cherry J.L."/>
            <person name="DiCuccio M."/>
            <person name="Hlavina W."/>
            <person name="Kapustin Y."/>
            <person name="Meric P."/>
            <person name="Maglott D."/>
            <person name="Birtle Z."/>
            <person name="Marques A.C."/>
            <person name="Graves T."/>
            <person name="Zhou S."/>
            <person name="Teague B."/>
            <person name="Potamousis K."/>
            <person name="Churas C."/>
            <person name="Place M."/>
            <person name="Herschleb J."/>
            <person name="Runnheim R."/>
            <person name="Forrest D."/>
            <person name="Amos-Landgraf J."/>
            <person name="Schwartz D.C."/>
            <person name="Cheng Z."/>
            <person name="Lindblad-Toh K."/>
            <person name="Eichler E.E."/>
            <person name="Ponting C.P."/>
        </authorList>
    </citation>
    <scope>NUCLEOTIDE SEQUENCE [LARGE SCALE GENOMIC DNA]</scope>
    <source>
        <strain>C57BL/6J</strain>
    </source>
</reference>
<reference key="4">
    <citation type="journal article" date="2004" name="Genome Res.">
        <title>The status, quality, and expansion of the NIH full-length cDNA project: the Mammalian Gene Collection (MGC).</title>
        <authorList>
            <consortium name="The MGC Project Team"/>
        </authorList>
    </citation>
    <scope>NUCLEOTIDE SEQUENCE [LARGE SCALE MRNA] OF 2560-2849 (ISOFORM 1/2/3/4)</scope>
</reference>
<organism>
    <name type="scientific">Mus musculus</name>
    <name type="common">Mouse</name>
    <dbReference type="NCBI Taxonomy" id="10090"/>
    <lineage>
        <taxon>Eukaryota</taxon>
        <taxon>Metazoa</taxon>
        <taxon>Chordata</taxon>
        <taxon>Craniata</taxon>
        <taxon>Vertebrata</taxon>
        <taxon>Euteleostomi</taxon>
        <taxon>Mammalia</taxon>
        <taxon>Eutheria</taxon>
        <taxon>Euarchontoglires</taxon>
        <taxon>Glires</taxon>
        <taxon>Rodentia</taxon>
        <taxon>Myomorpha</taxon>
        <taxon>Muroidea</taxon>
        <taxon>Muridae</taxon>
        <taxon>Murinae</taxon>
        <taxon>Mus</taxon>
        <taxon>Mus</taxon>
    </lineage>
</organism>
<dbReference type="EMBL" id="EU429481">
    <property type="protein sequence ID" value="ACA28707.1"/>
    <property type="molecule type" value="mRNA"/>
</dbReference>
<dbReference type="EMBL" id="EU429482">
    <property type="protein sequence ID" value="ACA28708.1"/>
    <property type="molecule type" value="mRNA"/>
</dbReference>
<dbReference type="EMBL" id="EU429483">
    <property type="protein sequence ID" value="ACA28709.2"/>
    <property type="molecule type" value="mRNA"/>
</dbReference>
<dbReference type="EMBL" id="GU290042">
    <property type="protein sequence ID" value="ADB78700.1"/>
    <property type="molecule type" value="mRNA"/>
</dbReference>
<dbReference type="EMBL" id="AK036509">
    <property type="protein sequence ID" value="BAC29455.1"/>
    <property type="molecule type" value="mRNA"/>
</dbReference>
<dbReference type="EMBL" id="AC108813">
    <property type="status" value="NOT_ANNOTATED_CDS"/>
    <property type="molecule type" value="Genomic_DNA"/>
</dbReference>
<dbReference type="EMBL" id="BC107027">
    <property type="protein sequence ID" value="AAI07028.1"/>
    <property type="status" value="ALT_INIT"/>
    <property type="molecule type" value="mRNA"/>
</dbReference>
<dbReference type="EMBL" id="BC107028">
    <property type="protein sequence ID" value="AAI07029.1"/>
    <property type="status" value="ALT_INIT"/>
    <property type="molecule type" value="mRNA"/>
</dbReference>
<dbReference type="CCDS" id="CCDS48379.1">
    <molecule id="Q3KNY0-1"/>
</dbReference>
<dbReference type="RefSeq" id="NP_808310.2">
    <molecule id="Q3KNY0-1"/>
    <property type="nucleotide sequence ID" value="NM_177642.3"/>
</dbReference>
<dbReference type="RefSeq" id="XP_017175436.1">
    <molecule id="Q3KNY0-3"/>
    <property type="nucleotide sequence ID" value="XM_017319947.2"/>
</dbReference>
<dbReference type="SMR" id="Q3KNY0"/>
<dbReference type="BioGRID" id="230514">
    <property type="interactions" value="1"/>
</dbReference>
<dbReference type="CORUM" id="Q3KNY0"/>
<dbReference type="FunCoup" id="Q3KNY0">
    <property type="interactions" value="317"/>
</dbReference>
<dbReference type="STRING" id="10090.ENSMUSP00000129680"/>
<dbReference type="GlyGen" id="Q3KNY0">
    <property type="glycosylation" value="3 sites, 1 O-linked glycan (2 sites)"/>
</dbReference>
<dbReference type="iPTMnet" id="Q3KNY0"/>
<dbReference type="PhosphoSitePlus" id="Q3KNY0"/>
<dbReference type="jPOST" id="Q3KNY0"/>
<dbReference type="PaxDb" id="10090-ENSMUSP00000129680"/>
<dbReference type="PeptideAtlas" id="Q3KNY0"/>
<dbReference type="ProteomicsDB" id="269460">
    <molecule id="Q3KNY0-1"/>
</dbReference>
<dbReference type="ProteomicsDB" id="269461">
    <molecule id="Q3KNY0-2"/>
</dbReference>
<dbReference type="ProteomicsDB" id="269462">
    <molecule id="Q3KNY0-3"/>
</dbReference>
<dbReference type="ProteomicsDB" id="269463">
    <molecule id="Q3KNY0-4"/>
</dbReference>
<dbReference type="ProteomicsDB" id="269464">
    <molecule id="Q3KNY0-5"/>
</dbReference>
<dbReference type="Antibodypedia" id="34499">
    <property type="antibodies" value="101 antibodies from 14 providers"/>
</dbReference>
<dbReference type="DNASU" id="226438"/>
<dbReference type="Ensembl" id="ENSMUST00000166193.9">
    <molecule id="Q3KNY0-1"/>
    <property type="protein sequence ID" value="ENSMUSP00000129680.3"/>
    <property type="gene ID" value="ENSMUSG00000051985.13"/>
</dbReference>
<dbReference type="GeneID" id="226438"/>
<dbReference type="KEGG" id="mmu:226438"/>
<dbReference type="UCSC" id="uc007cuc.2">
    <molecule id="Q3KNY0-3"/>
    <property type="organism name" value="mouse"/>
</dbReference>
<dbReference type="UCSC" id="uc011wst.1">
    <molecule id="Q3KNY0-1"/>
    <property type="organism name" value="mouse"/>
</dbReference>
<dbReference type="UCSC" id="uc011wsu.1">
    <molecule id="Q3KNY0-4"/>
    <property type="organism name" value="mouse"/>
</dbReference>
<dbReference type="AGR" id="MGI:3045352"/>
<dbReference type="CTD" id="91156"/>
<dbReference type="MGI" id="MGI:3045352">
    <property type="gene designation" value="Igfn1"/>
</dbReference>
<dbReference type="VEuPathDB" id="HostDB:ENSMUSG00000051985"/>
<dbReference type="eggNOG" id="KOG0613">
    <property type="taxonomic scope" value="Eukaryota"/>
</dbReference>
<dbReference type="GeneTree" id="ENSGT00940000162073"/>
<dbReference type="HOGENOM" id="CLU_000240_0_0_1"/>
<dbReference type="InParanoid" id="Q3KNY0"/>
<dbReference type="OMA" id="EPDFWNG"/>
<dbReference type="OrthoDB" id="504170at2759"/>
<dbReference type="PhylomeDB" id="Q3KNY0"/>
<dbReference type="BioGRID-ORCS" id="226438">
    <property type="hits" value="2 hits in 77 CRISPR screens"/>
</dbReference>
<dbReference type="ChiTaRS" id="Igfn1">
    <property type="organism name" value="mouse"/>
</dbReference>
<dbReference type="PRO" id="PR:Q3KNY0"/>
<dbReference type="Proteomes" id="UP000000589">
    <property type="component" value="Chromosome 1"/>
</dbReference>
<dbReference type="RNAct" id="Q3KNY0">
    <property type="molecule type" value="protein"/>
</dbReference>
<dbReference type="Bgee" id="ENSMUSG00000051985">
    <property type="expression patterns" value="Expressed in quadriceps femoris and 12 other cell types or tissues"/>
</dbReference>
<dbReference type="ExpressionAtlas" id="Q3KNY0">
    <property type="expression patterns" value="baseline and differential"/>
</dbReference>
<dbReference type="GO" id="GO:0005634">
    <property type="term" value="C:nucleus"/>
    <property type="evidence" value="ECO:0000314"/>
    <property type="project" value="UniProtKB"/>
</dbReference>
<dbReference type="GO" id="GO:0030018">
    <property type="term" value="C:Z disc"/>
    <property type="evidence" value="ECO:0000314"/>
    <property type="project" value="UniProtKB"/>
</dbReference>
<dbReference type="GO" id="GO:0045445">
    <property type="term" value="P:myoblast differentiation"/>
    <property type="evidence" value="ECO:0000315"/>
    <property type="project" value="MGI"/>
</dbReference>
<dbReference type="GO" id="GO:0007520">
    <property type="term" value="P:myoblast fusion"/>
    <property type="evidence" value="ECO:0000315"/>
    <property type="project" value="MGI"/>
</dbReference>
<dbReference type="GO" id="GO:0014902">
    <property type="term" value="P:myotube differentiation"/>
    <property type="evidence" value="ECO:0000315"/>
    <property type="project" value="MGI"/>
</dbReference>
<dbReference type="CDD" id="cd00063">
    <property type="entry name" value="FN3"/>
    <property type="match status" value="4"/>
</dbReference>
<dbReference type="FunFam" id="2.60.40.10:FF:001231">
    <property type="entry name" value="Immunoglobulin-like and fibronectin type III domain containing 1"/>
    <property type="match status" value="1"/>
</dbReference>
<dbReference type="FunFam" id="2.60.40.10:FF:001267">
    <property type="entry name" value="Immunoglobulin-like and fibronectin type III domain containing 1"/>
    <property type="match status" value="1"/>
</dbReference>
<dbReference type="FunFam" id="2.60.40.10:FF:000617">
    <property type="entry name" value="Immunoglobulin-like and fibronectin type III domain-containing 1"/>
    <property type="match status" value="1"/>
</dbReference>
<dbReference type="FunFam" id="2.60.40.10:FF:001232">
    <property type="entry name" value="Immunoglobulin-like and fibronectin type III domain-containing 1"/>
    <property type="match status" value="1"/>
</dbReference>
<dbReference type="FunFam" id="2.60.40.10:FF:001435">
    <property type="entry name" value="Immunoglobulin-like and fibronectin type III domain-containing 1"/>
    <property type="match status" value="1"/>
</dbReference>
<dbReference type="FunFam" id="2.60.40.10:FF:001525">
    <property type="entry name" value="Immunoglobulin-like and fibronectin type III domain-containing 1"/>
    <property type="match status" value="1"/>
</dbReference>
<dbReference type="FunFam" id="2.60.40.10:FF:001097">
    <property type="entry name" value="Immunoglobulin-like and fibronectin type III domain-containing protein 1"/>
    <property type="match status" value="1"/>
</dbReference>
<dbReference type="FunFam" id="2.60.40.10:FF:001438">
    <property type="entry name" value="Immunoglobulin-like and fibronectin type III domain-containing protein 1"/>
    <property type="match status" value="1"/>
</dbReference>
<dbReference type="FunFam" id="2.60.40.10:FF:001401">
    <property type="entry name" value="immunoglobulin-like and fibronectin type III domain-containing protein 1"/>
    <property type="match status" value="1"/>
</dbReference>
<dbReference type="FunFam" id="2.60.40.10:FF:000425">
    <property type="entry name" value="Myosin light chain kinase"/>
    <property type="match status" value="1"/>
</dbReference>
<dbReference type="Gene3D" id="2.60.40.10">
    <property type="entry name" value="Immunoglobulins"/>
    <property type="match status" value="11"/>
</dbReference>
<dbReference type="InterPro" id="IPR003961">
    <property type="entry name" value="FN3_dom"/>
</dbReference>
<dbReference type="InterPro" id="IPR036116">
    <property type="entry name" value="FN3_sf"/>
</dbReference>
<dbReference type="InterPro" id="IPR007110">
    <property type="entry name" value="Ig-like_dom"/>
</dbReference>
<dbReference type="InterPro" id="IPR036179">
    <property type="entry name" value="Ig-like_dom_sf"/>
</dbReference>
<dbReference type="InterPro" id="IPR013783">
    <property type="entry name" value="Ig-like_fold"/>
</dbReference>
<dbReference type="InterPro" id="IPR013098">
    <property type="entry name" value="Ig_I-set"/>
</dbReference>
<dbReference type="InterPro" id="IPR003599">
    <property type="entry name" value="Ig_sub"/>
</dbReference>
<dbReference type="InterPro" id="IPR003598">
    <property type="entry name" value="Ig_sub2"/>
</dbReference>
<dbReference type="InterPro" id="IPR040849">
    <property type="entry name" value="MyBP-C_THB"/>
</dbReference>
<dbReference type="InterPro" id="IPR050964">
    <property type="entry name" value="Striated_Muscle_Regulatory"/>
</dbReference>
<dbReference type="PANTHER" id="PTHR13817:SF171">
    <property type="entry name" value="STRETCHIN-MLCK, ISOFORM U"/>
    <property type="match status" value="1"/>
</dbReference>
<dbReference type="PANTHER" id="PTHR13817">
    <property type="entry name" value="TITIN"/>
    <property type="match status" value="1"/>
</dbReference>
<dbReference type="Pfam" id="PF00041">
    <property type="entry name" value="fn3"/>
    <property type="match status" value="4"/>
</dbReference>
<dbReference type="Pfam" id="PF07679">
    <property type="entry name" value="I-set"/>
    <property type="match status" value="4"/>
</dbReference>
<dbReference type="Pfam" id="PF18362">
    <property type="entry name" value="THB"/>
    <property type="match status" value="1"/>
</dbReference>
<dbReference type="SMART" id="SM00060">
    <property type="entry name" value="FN3"/>
    <property type="match status" value="4"/>
</dbReference>
<dbReference type="SMART" id="SM00409">
    <property type="entry name" value="IG"/>
    <property type="match status" value="6"/>
</dbReference>
<dbReference type="SMART" id="SM00408">
    <property type="entry name" value="IGc2"/>
    <property type="match status" value="3"/>
</dbReference>
<dbReference type="SUPFAM" id="SSF49265">
    <property type="entry name" value="Fibronectin type III"/>
    <property type="match status" value="2"/>
</dbReference>
<dbReference type="SUPFAM" id="SSF48726">
    <property type="entry name" value="Immunoglobulin"/>
    <property type="match status" value="6"/>
</dbReference>
<dbReference type="PROSITE" id="PS50853">
    <property type="entry name" value="FN3"/>
    <property type="match status" value="4"/>
</dbReference>
<dbReference type="PROSITE" id="PS50835">
    <property type="entry name" value="IG_LIKE"/>
    <property type="match status" value="5"/>
</dbReference>
<gene>
    <name type="primary">Igfn1</name>
</gene>
<comment type="subunit">
    <text evidence="4">Interacts with FLNC. Interacts with KY.</text>
</comment>
<comment type="subcellular location">
    <subcellularLocation>
        <location evidence="4">Nucleus</location>
    </subcellularLocation>
    <subcellularLocation>
        <location evidence="4">Cytoplasm</location>
        <location evidence="4">Myofibril</location>
        <location evidence="4">Sarcomere</location>
        <location evidence="4">Z line</location>
    </subcellularLocation>
</comment>
<comment type="alternative products">
    <event type="alternative splicing"/>
    <isoform>
        <id>Q3KNY0-1</id>
        <name>1</name>
        <name>IGFN1</name>
        <sequence type="displayed"/>
    </isoform>
    <isoform>
        <id>Q3KNY0-2</id>
        <name>2</name>
        <name>IGFN1_v2</name>
        <sequence type="described" ref="VSP_039842"/>
    </isoform>
    <isoform>
        <id>Q3KNY0-3</id>
        <name>3</name>
        <name>IGFN1_v3</name>
        <sequence type="described" ref="VSP_035062 VSP_035065"/>
    </isoform>
    <isoform>
        <id>Q3KNY0-4</id>
        <name>4</name>
        <name>IGFN1_v1</name>
        <sequence type="described" ref="VSP_039843"/>
    </isoform>
    <isoform>
        <id>Q3KNY0-5</id>
        <name>5</name>
        <sequence type="described" ref="VSP_035061"/>
    </isoform>
</comment>
<comment type="tissue specificity">
    <text evidence="4">Isoform 1, isoform 3 and isoform 4 are expressed in skeletal muscle while isoform 2 is detected in both skeletal muscle and heart (at protein level).</text>
</comment>
<comment type="sequence caution" evidence="7">
    <conflict type="erroneous initiation">
        <sequence resource="EMBL-CDS" id="AAI07028"/>
    </conflict>
    <text>Truncated N-terminus.</text>
</comment>
<comment type="sequence caution" evidence="7">
    <conflict type="erroneous initiation">
        <sequence resource="EMBL-CDS" id="AAI07029"/>
    </conflict>
    <text>Truncated N-terminus.</text>
</comment>
<accession>Q3KNY0</accession>
<accession>Q8BZ74</accession>
<proteinExistence type="evidence at protein level"/>
<sequence>MNEMRTQVRIEFHALATQRKPSASPPTIEEDMGQGCTLEALVIPSRRAEQSTQHPDSSFMATVRGAKSVVVSQWQLLQAGSAGSAARPDGSGSESLAASSSWKPRRRLEAGGPCRSWLVFLVSREGWSDSNPGYRKQFICRPQEIGFHSEEHREAGTMAAKPPKKSSIPGVSIRQLVDEIPEGCSTPDFKQKPVTLALPEGKNAIFRAVVCGEPRPEVHWQSSKGDLSNSAKYQISSAPGREEHVLQINKLTGEDSDLYRCTALNAYGEATCSVRLTVIEVGFRKNRKRQKEPQEDLRKELMDFRKMLKKRAPPPTPEKKMESEQVWQLLVTADRKDYEKICMQYGIVDFRGMLRKLQEMKKEQEDRMAQYVSAIANLRHIKVTKEGVATFDLELDLKNLESKIYLYKDGEMIPYGVDNQTKHCLRRLGKRYHFQIQDLRPEDAGLYQVMVEDAVVFSTELESRTIPPRVVVPLAETRCEERGDAVFECTLSNPCPSATWHFQHRPLRLSDKYEVFVSPDGLTHRLVVKGASSSDMGLYSLNTGLHASSAWLVVEGGKDKGPQTTDTDHRLQTPEALASEAEDAGGISIKGGQSRERGSLKEISGAQLTAGPDRGAFGKHGYPLVVDEDIVNSTWGPGQDKKSFLEGGQLRVTLPGDSQSQREGDCGRSLPRRSHLQGEDTESDLGFLERGQQGPGRVDSENGRWETAGGQSAGSSHPRDRRLESRGEGQEHSEGHGSELDRYGQGQCHDPQLGAGAGQRVPWGSQFDAEGLQLKKEGTEMWGDCLDVTEGRGNLRKERGTAAGSSNRARLWEARGGSGAGSPCVPEFPRGGAHSSKAGMGPECWPGGDAGHGEAGVYWGAGGYPGQTSEGNDTQKSSLSGDRKLLGCTSPEAKAEGSFQSADGHGIVGRVYKPGPEGPEDLRSQKSGLQEIQGRNGQGSAGALGRTVEGSRSLQFPQSWTVGQREAGKPGGAEYEDIGPQDDTWSNLREMGGHCGSGVLASGGREGSVGGSQVAALMMSSQRVDARNHRLVTSPGLGVQGSGRTLGHMEGLRDPEAVGSEEEFWNGSGRSQGKGSRGGMGLGGPEWAESRNEEGWENSEGMASRNGATCRDGSRMQEGTGSGPDIGCKAPCGAPAETESGKWGTYSHDSGVPGGLWSGSKSQCSPAGKVSGREASLRNGSAGLHGMPSSEAQQRDVFQGHGQTGHIGEHHCARGLGSSETVGSVGGHGRKDSGTAGKVGEGYTEAEPGHSGGLSSWGHTGDYEDFRVLGAFREGDFGNGTGVPLSMGPRSLERGDKEGDGERISFLGARTSTVGTGNWDKARHPGAPSPHEAGSEGHWAQVSGNALGCRDGSGIPEPWSAGDKTAYGEESKGLGPERTGPDGEVAFRGSSSSLRGMGPASEASYKSGTWGPGAVGSGFKVDCRNDLGCSGSMGSESKAGYKNKIESHGVRELGDLTGYKNDLGPSELISSRNEARGLEHSGDILSWNKAGLRDGLGETGRMESKNGVGYRGSSVGPGEMGSERKMHLADGSGRLGGPGSLAAPKEHESVGLGSVYEGAAEIGSKYNREKVRGMGFRDATGPEVGSGVAGMLDITGGIAHGDSAMGTEKLGTPDRPYILSGGQGTKNSLGGCVSLGIPDALGAVGSVGKPGIREWKDDSGFQGSLRDRGTPSEEIRSVDQAGAIGTSRLLDSRGAVEDGSGSENDFDFNKSGLETTGRCRVADQQGVTPQGCGGSLLNGRRKGTSSGSLSGVGQEVDRSSTPGRETKVMSGPGSGRATSHTRAADWEDGVQCSFGASSSLPDTDAIFRETHAGQGAFKGRGCETGQGAAGECQGPRSLGSRGSEFVGGRAGFTGSSSVPGRRDSTIYGDAVTSKPQEPQNELYSPLGRRDFKSVSGGIQEPGFQRGTGQGEGKESFQESGSWEAELDEVQGSRASAKFENQGGKDPGWSGQKPGPCGSRHQVQSGTEVGSAKRATPQGAGGLEPWAGSEDRGSLREPWSEDRRQGPHRHLGSRRDTQEGRSDVCGQAQDATQSPRSRYQPGTGRSSSEARGSMDHFSQGLTDTEVQLGEAAIVSCTLASDLGPGTWFKDGVKLTAQDGVIFEQDGLTHRLILTHVEGTQAGKYTFVAGCQHSEASLTVQDPPTIAPDVTETLREPLVFKAGKPVTVKIPFQSRLPVQAAWRKDGNEVVGGDHKGIQLALADGYTWLCLPSVCRKDSGRYSVTLRSEGGCVQAEFTLQVIDKPQPPQGPLEVQDCHRAGVCLRWLPPRDNGGQVIQHYVVERRQAGRSTWLKVGEPPSDSTSFTDTSVEQGKKYAFRVRAVTSVGAGDALESEEVLVAPEALPGPPSAPAILSASSQSITLTWGAPQGPGSNHILGYLIEKHKKGSNTWMAVNEQPVSERRYTVVGLRQGCQYEFRVTAVTLSGPGDPGPPSDAVFARDPMRPPGPVRDLQVTDTSNTSITVSWMVPDARDADEAQGYIVELCGSDSHQWSPCHVGTVPGTTFTAKGLRPQEGYFVRVTAVNDGGRSQATSLDTLVHAMPATVCPRFLMDSGTKDTLMVRVGDSIRVPLSFEAAPMPEVTWLKDGLPLPKRSVTTVKAGLTQLLIPAASLSDCGRYTVMLRNLQGKEATHSFFINVAACPQAPGSIYLQENVPGTVTVQWEPSPDEAQGIPLHYTVLMRSSSHRSWHEVADHVRTNRFTLLGVLPGHEYHFRVLAKNELGVSKPSDTSQPWCIPRQRDRFTVKSPTYQDPDLSQKPRFLVGLRAHLLPQGCECRMTCAVQGSPQPHVTWFKNDQSLDRNPAVYSTDLLGVCSLVIPSVSLKDSGEYKAVAKNPLGQAVSTATLIVTEYDS</sequence>